<accession>Q6P902</accession>
<accession>Q8CJD1</accession>
<keyword id="KW-0963">Cytoplasm</keyword>
<keyword id="KW-0217">Developmental protein</keyword>
<keyword id="KW-0221">Differentiation</keyword>
<keyword id="KW-1015">Disulfide bond</keyword>
<keyword id="KW-0597">Phosphoprotein</keyword>
<keyword id="KW-0676">Redox-active center</keyword>
<keyword id="KW-1185">Reference proteome</keyword>
<keyword id="KW-0677">Repeat</keyword>
<keyword id="KW-0744">Spermatogenesis</keyword>
<gene>
    <name type="primary">Txndc2</name>
    <name type="synonym">Sptrx</name>
    <name type="synonym">Sptrx1</name>
    <name type="synonym">Trx4</name>
</gene>
<reference key="1">
    <citation type="journal article" date="2002" name="Mol. Hum. Reprod.">
        <title>Cloning, expression and characterization of mouse spermatid specific thioredoxin-1 gene and protein.</title>
        <authorList>
            <person name="Jimenez A."/>
            <person name="Oko R."/>
            <person name="Gustafsson J.-A."/>
            <person name="Spyrou G."/>
            <person name="Pelto-Huikko M."/>
            <person name="Miranda-Vizuete A."/>
        </authorList>
    </citation>
    <scope>NUCLEOTIDE SEQUENCE [MRNA]</scope>
    <scope>TISSUE SPECIFICITY</scope>
    <scope>ENZYME ACTIVITY IN VITRO</scope>
</reference>
<reference key="2">
    <citation type="journal article" date="2004" name="Genome Res.">
        <title>The status, quality, and expansion of the NIH full-length cDNA project: the Mammalian Gene Collection (MGC).</title>
        <authorList>
            <consortium name="The MGC Project Team"/>
        </authorList>
    </citation>
    <scope>NUCLEOTIDE SEQUENCE [LARGE SCALE MRNA]</scope>
    <source>
        <tissue>Testis</tissue>
    </source>
</reference>
<reference key="3">
    <citation type="journal article" date="2002" name="Biol. Reprod.">
        <title>Developmental expression of spermatid-specific thioredoxin-1 protein: transient association to the longitudinal columns of the fibrous sheath during sperm tail formation.</title>
        <authorList>
            <person name="Yu Y."/>
            <person name="Oko R."/>
            <person name="Miranda-Vizuete A."/>
        </authorList>
    </citation>
    <scope>TISSUE SPECIFICITY</scope>
    <scope>DEVELOPMENTAL STAGE</scope>
</reference>
<reference key="4">
    <citation type="journal article" date="2005" name="Biochem. Biophys. Res. Commun.">
        <title>Absolute mRNA levels and transcriptional regulation of the mouse testis-specific thioredoxins.</title>
        <authorList>
            <person name="Jimenez A."/>
            <person name="Prieto-Alamo M.J."/>
            <person name="Fuentes-Almagro C.A."/>
            <person name="Jurado J."/>
            <person name="Gustafsson J.-A."/>
            <person name="Pueyo C."/>
            <person name="Miranda-Vizuete A."/>
        </authorList>
    </citation>
    <scope>DEVELOPMENTAL STAGE</scope>
</reference>
<reference key="5">
    <citation type="journal article" date="2010" name="Cell">
        <title>A tissue-specific atlas of mouse protein phosphorylation and expression.</title>
        <authorList>
            <person name="Huttlin E.L."/>
            <person name="Jedrychowski M.P."/>
            <person name="Elias J.E."/>
            <person name="Goswami T."/>
            <person name="Rad R."/>
            <person name="Beausoleil S.A."/>
            <person name="Villen J."/>
            <person name="Haas W."/>
            <person name="Sowa M.E."/>
            <person name="Gygi S.P."/>
        </authorList>
    </citation>
    <scope>IDENTIFICATION BY MASS SPECTROMETRY [LARGE SCALE ANALYSIS]</scope>
    <source>
        <tissue>Testis</tissue>
    </source>
</reference>
<protein>
    <recommendedName>
        <fullName>Thioredoxin domain-containing protein 2</fullName>
    </recommendedName>
    <alternativeName>
        <fullName>Spermatid-specific thioredoxin-1</fullName>
        <shortName>Sptrx-1</shortName>
    </alternativeName>
    <alternativeName>
        <fullName>Thioredoxin-4</fullName>
    </alternativeName>
</protein>
<sequence length="515" mass="57767">MTLNNGGKANERGSNENPLQALSKNEAFLVPEFLDTAQSKEKAIASKVSNTLHMSTEESEFPQQVSSTPMFSENTVHPRHEVSPKPSSKNTQLKQENISKSSGYSKQTNYSNTPKSLAKTTHPKQGSTLKPATNSTHYREDDIPKSSEDIIQPKKGDRPKSSEDIIQSKKEDRPKSSEDIIQSKKEDRPKSSEDIIQSKKEDRPKSSEDIIQSKKEDRPKSSEDIIQPKKEDRPKSSEDSVPSKKGDRPKSSEDSVQPKKEDRPKSSEDSVQSKEGEVHKPLKDSIQSKETKVPKSPQDSIQSKEDKTHRPLKDSVQSKESEEPKSSHESIQSKEDKIHKPLKDSIPSKEGDIPKSPEDTIQSQEEITASEEDTIQSQEGNTIKSSEEDVQLSESKLLGLGAEIETLEEGLVRVIKDKEEFEEVLKDAGEKLVAVDFSAAWCGPCRMMKPLFHSLSLKHEDVIFLEVDTEDCEQLVQDCEIFHLPTFQFYKNEEKVGEFSGALVGKLERSISELK</sequence>
<proteinExistence type="evidence at protein level"/>
<dbReference type="EMBL" id="AF196282">
    <property type="protein sequence ID" value="AAM94687.2"/>
    <property type="status" value="ALT_INIT"/>
    <property type="molecule type" value="mRNA"/>
</dbReference>
<dbReference type="EMBL" id="BC060981">
    <property type="protein sequence ID" value="AAH60981.1"/>
    <property type="molecule type" value="mRNA"/>
</dbReference>
<dbReference type="RefSeq" id="NP_001139474.1">
    <property type="nucleotide sequence ID" value="NM_001146002.1"/>
</dbReference>
<dbReference type="RefSeq" id="NP_705739.2">
    <property type="nucleotide sequence ID" value="NM_153519.2"/>
</dbReference>
<dbReference type="SMR" id="Q6P902"/>
<dbReference type="FunCoup" id="Q6P902">
    <property type="interactions" value="7"/>
</dbReference>
<dbReference type="STRING" id="10090.ENSMUSP00000054909"/>
<dbReference type="iPTMnet" id="Q6P902"/>
<dbReference type="PhosphoSitePlus" id="Q6P902"/>
<dbReference type="PaxDb" id="10090-ENSMUSP00000054909"/>
<dbReference type="ProteomicsDB" id="298397"/>
<dbReference type="DNASU" id="213272"/>
<dbReference type="GeneID" id="213272"/>
<dbReference type="KEGG" id="mmu:213272"/>
<dbReference type="AGR" id="MGI:2389312"/>
<dbReference type="CTD" id="84203"/>
<dbReference type="MGI" id="MGI:2389312">
    <property type="gene designation" value="Txndc2"/>
</dbReference>
<dbReference type="eggNOG" id="KOG0907">
    <property type="taxonomic scope" value="Eukaryota"/>
</dbReference>
<dbReference type="InParanoid" id="Q6P902"/>
<dbReference type="OrthoDB" id="2121326at2759"/>
<dbReference type="PhylomeDB" id="Q6P902"/>
<dbReference type="BioGRID-ORCS" id="213272">
    <property type="hits" value="0 hits in 77 CRISPR screens"/>
</dbReference>
<dbReference type="ChiTaRS" id="Txndc2">
    <property type="organism name" value="mouse"/>
</dbReference>
<dbReference type="PRO" id="PR:Q6P902"/>
<dbReference type="Proteomes" id="UP000000589">
    <property type="component" value="Unplaced"/>
</dbReference>
<dbReference type="RNAct" id="Q6P902">
    <property type="molecule type" value="protein"/>
</dbReference>
<dbReference type="GO" id="GO:0005737">
    <property type="term" value="C:cytoplasm"/>
    <property type="evidence" value="ECO:0007669"/>
    <property type="project" value="UniProtKB-SubCell"/>
</dbReference>
<dbReference type="GO" id="GO:0036126">
    <property type="term" value="C:sperm flagellum"/>
    <property type="evidence" value="ECO:0000314"/>
    <property type="project" value="MGI"/>
</dbReference>
<dbReference type="GO" id="GO:0003756">
    <property type="term" value="F:protein disulfide isomerase activity"/>
    <property type="evidence" value="ECO:0000314"/>
    <property type="project" value="MGI"/>
</dbReference>
<dbReference type="GO" id="GO:0030154">
    <property type="term" value="P:cell differentiation"/>
    <property type="evidence" value="ECO:0007669"/>
    <property type="project" value="UniProtKB-KW"/>
</dbReference>
<dbReference type="GO" id="GO:0034614">
    <property type="term" value="P:cellular response to reactive oxygen species"/>
    <property type="evidence" value="ECO:0000316"/>
    <property type="project" value="MGI"/>
</dbReference>
<dbReference type="GO" id="GO:0030317">
    <property type="term" value="P:flagellated sperm motility"/>
    <property type="evidence" value="ECO:0000316"/>
    <property type="project" value="MGI"/>
</dbReference>
<dbReference type="GO" id="GO:0007283">
    <property type="term" value="P:spermatogenesis"/>
    <property type="evidence" value="ECO:0007669"/>
    <property type="project" value="UniProtKB-KW"/>
</dbReference>
<dbReference type="CDD" id="cd02947">
    <property type="entry name" value="TRX_family"/>
    <property type="match status" value="1"/>
</dbReference>
<dbReference type="Gene3D" id="3.40.30.10">
    <property type="entry name" value="Glutaredoxin"/>
    <property type="match status" value="1"/>
</dbReference>
<dbReference type="InterPro" id="IPR036249">
    <property type="entry name" value="Thioredoxin-like_sf"/>
</dbReference>
<dbReference type="InterPro" id="IPR013766">
    <property type="entry name" value="Thioredoxin_domain"/>
</dbReference>
<dbReference type="InterPro" id="IPR050620">
    <property type="entry name" value="Thioredoxin_H-type-like"/>
</dbReference>
<dbReference type="PANTHER" id="PTHR10438">
    <property type="entry name" value="THIOREDOXIN"/>
    <property type="match status" value="1"/>
</dbReference>
<dbReference type="PANTHER" id="PTHR10438:SF107">
    <property type="entry name" value="THIOREDOXIN DOMAIN-CONTAINING PROTEIN 2"/>
    <property type="match status" value="1"/>
</dbReference>
<dbReference type="Pfam" id="PF00085">
    <property type="entry name" value="Thioredoxin"/>
    <property type="match status" value="1"/>
</dbReference>
<dbReference type="SUPFAM" id="SSF52833">
    <property type="entry name" value="Thioredoxin-like"/>
    <property type="match status" value="1"/>
</dbReference>
<dbReference type="PROSITE" id="PS51352">
    <property type="entry name" value="THIOREDOXIN_2"/>
    <property type="match status" value="1"/>
</dbReference>
<evidence type="ECO:0000250" key="1">
    <source>
        <dbReference type="UniProtKB" id="Q5XHX6"/>
    </source>
</evidence>
<evidence type="ECO:0000255" key="2">
    <source>
        <dbReference type="PROSITE-ProRule" id="PRU00691"/>
    </source>
</evidence>
<evidence type="ECO:0000256" key="3">
    <source>
        <dbReference type="SAM" id="MobiDB-lite"/>
    </source>
</evidence>
<evidence type="ECO:0000269" key="4">
    <source>
    </source>
</evidence>
<evidence type="ECO:0000269" key="5">
    <source>
    </source>
</evidence>
<evidence type="ECO:0000269" key="6">
    <source>
    </source>
</evidence>
<evidence type="ECO:0000305" key="7"/>
<comment type="function">
    <text>Probably plays a regulatory role in sperm development. May participate in regulation of fibrous sheath (FS) assembly by supporting the formation of disulfide bonds during sperm tail morphogenesis. May also be required to rectify incorrect disulfide pairing and generate suitable pairs between the FS constituents. Can reduce disulfide bonds in vitro in the presence of NADP and thioredoxin reductase.</text>
</comment>
<comment type="subcellular location">
    <subcellularLocation>
        <location>Cytoplasm</location>
    </subcellularLocation>
</comment>
<comment type="tissue specificity">
    <text evidence="4 5">Testis-specific. Strongly expressed in the testicular seminiferous tubules, mostly in the round spermatids.</text>
</comment>
<comment type="developmental stage">
    <text evidence="5 6">Expressed during spermiogenesis, restricted to the postmeiotic phase of spermatogenesis. First detected in elongating spermatids tails during steps 9 and 10 and is prominent in this region during steps 11-16. Also weakly present in the cytoplasmic lobe of these spermatids. During the last steps of spermiogenesis (steps 17-19), it strongly diminishes in the tail but appears to increase or become concentrated in the shrinking cytoplasmic lobe. By the last step of spermiogenesis (late step 19), cytoplasmic localization is barely detectable in the resulting residual body but still detectable in the cytoplasmic droplet (at protein level). Detected in testis of pre-pubertal animals at very low level.</text>
</comment>
<comment type="sequence caution" evidence="7">
    <conflict type="erroneous initiation">
        <sequence resource="EMBL-CDS" id="AAM94687"/>
    </conflict>
</comment>
<feature type="chain" id="PRO_0000120154" description="Thioredoxin domain-containing protein 2">
    <location>
        <begin position="1"/>
        <end position="515"/>
    </location>
</feature>
<feature type="repeat" description="1">
    <location>
        <begin position="92"/>
        <end position="106"/>
    </location>
</feature>
<feature type="repeat" description="2">
    <location>
        <begin position="107"/>
        <end position="121"/>
    </location>
</feature>
<feature type="repeat" description="3">
    <location>
        <begin position="122"/>
        <end position="136"/>
    </location>
</feature>
<feature type="repeat" description="4">
    <location>
        <begin position="137"/>
        <end position="151"/>
    </location>
</feature>
<feature type="repeat" description="5">
    <location>
        <begin position="152"/>
        <end position="166"/>
    </location>
</feature>
<feature type="repeat" description="6">
    <location>
        <begin position="167"/>
        <end position="181"/>
    </location>
</feature>
<feature type="repeat" description="7">
    <location>
        <begin position="182"/>
        <end position="196"/>
    </location>
</feature>
<feature type="repeat" description="8">
    <location>
        <begin position="197"/>
        <end position="211"/>
    </location>
</feature>
<feature type="repeat" description="9">
    <location>
        <begin position="212"/>
        <end position="226"/>
    </location>
</feature>
<feature type="repeat" description="10">
    <location>
        <begin position="227"/>
        <end position="241"/>
    </location>
</feature>
<feature type="repeat" description="11">
    <location>
        <begin position="242"/>
        <end position="256"/>
    </location>
</feature>
<feature type="repeat" description="12">
    <location>
        <begin position="257"/>
        <end position="271"/>
    </location>
</feature>
<feature type="repeat" description="13">
    <location>
        <begin position="272"/>
        <end position="286"/>
    </location>
</feature>
<feature type="repeat" description="14">
    <location>
        <begin position="287"/>
        <end position="301"/>
    </location>
</feature>
<feature type="repeat" description="15">
    <location>
        <begin position="302"/>
        <end position="316"/>
    </location>
</feature>
<feature type="repeat" description="16">
    <location>
        <begin position="317"/>
        <end position="331"/>
    </location>
</feature>
<feature type="repeat" description="17">
    <location>
        <begin position="332"/>
        <end position="346"/>
    </location>
</feature>
<feature type="repeat" description="18">
    <location>
        <begin position="347"/>
        <end position="362"/>
    </location>
</feature>
<feature type="repeat" description="19">
    <location>
        <begin position="363"/>
        <end position="375"/>
    </location>
</feature>
<feature type="repeat" description="20">
    <location>
        <begin position="376"/>
        <end position="390"/>
    </location>
</feature>
<feature type="repeat" description="21">
    <location>
        <begin position="391"/>
        <end position="405"/>
    </location>
</feature>
<feature type="domain" description="Thioredoxin" evidence="2">
    <location>
        <begin position="398"/>
        <end position="515"/>
    </location>
</feature>
<feature type="region of interest" description="Disordered" evidence="3">
    <location>
        <begin position="1"/>
        <end position="23"/>
    </location>
</feature>
<feature type="region of interest" description="Disordered" evidence="3">
    <location>
        <begin position="51"/>
        <end position="390"/>
    </location>
</feature>
<feature type="region of interest" description="21 X 15 AA approximate tandem repeat of Q-P-K-X-G-D-I-P-K-S-[PS]-E-[KE]-X-I">
    <location>
        <begin position="92"/>
        <end position="405"/>
    </location>
</feature>
<feature type="compositionally biased region" description="Polar residues" evidence="3">
    <location>
        <begin position="61"/>
        <end position="75"/>
    </location>
</feature>
<feature type="compositionally biased region" description="Polar residues" evidence="3">
    <location>
        <begin position="85"/>
        <end position="136"/>
    </location>
</feature>
<feature type="compositionally biased region" description="Basic and acidic residues" evidence="3">
    <location>
        <begin position="137"/>
        <end position="293"/>
    </location>
</feature>
<feature type="compositionally biased region" description="Basic and acidic residues" evidence="3">
    <location>
        <begin position="302"/>
        <end position="358"/>
    </location>
</feature>
<feature type="compositionally biased region" description="Polar residues" evidence="3">
    <location>
        <begin position="375"/>
        <end position="384"/>
    </location>
</feature>
<feature type="modified residue" description="Phosphoserine" evidence="1">
    <location>
        <position position="14"/>
    </location>
</feature>
<feature type="modified residue" description="Phosphoserine" evidence="1">
    <location>
        <position position="39"/>
    </location>
</feature>
<feature type="modified residue" description="Phosphoserine" evidence="1">
    <location>
        <position position="146"/>
    </location>
</feature>
<feature type="disulfide bond" description="Redox-active" evidence="2">
    <location>
        <begin position="442"/>
        <end position="445"/>
    </location>
</feature>
<name>TXND2_MOUSE</name>
<organism>
    <name type="scientific">Mus musculus</name>
    <name type="common">Mouse</name>
    <dbReference type="NCBI Taxonomy" id="10090"/>
    <lineage>
        <taxon>Eukaryota</taxon>
        <taxon>Metazoa</taxon>
        <taxon>Chordata</taxon>
        <taxon>Craniata</taxon>
        <taxon>Vertebrata</taxon>
        <taxon>Euteleostomi</taxon>
        <taxon>Mammalia</taxon>
        <taxon>Eutheria</taxon>
        <taxon>Euarchontoglires</taxon>
        <taxon>Glires</taxon>
        <taxon>Rodentia</taxon>
        <taxon>Myomorpha</taxon>
        <taxon>Muroidea</taxon>
        <taxon>Muridae</taxon>
        <taxon>Murinae</taxon>
        <taxon>Mus</taxon>
        <taxon>Mus</taxon>
    </lineage>
</organism>